<evidence type="ECO:0000250" key="1"/>
<evidence type="ECO:0000269" key="2">
    <source>
    </source>
</evidence>
<evidence type="ECO:0000305" key="3"/>
<organism>
    <name type="scientific">Nicotiana tabacum</name>
    <name type="common">Common tobacco</name>
    <dbReference type="NCBI Taxonomy" id="4097"/>
    <lineage>
        <taxon>Eukaryota</taxon>
        <taxon>Viridiplantae</taxon>
        <taxon>Streptophyta</taxon>
        <taxon>Embryophyta</taxon>
        <taxon>Tracheophyta</taxon>
        <taxon>Spermatophyta</taxon>
        <taxon>Magnoliopsida</taxon>
        <taxon>eudicotyledons</taxon>
        <taxon>Gunneridae</taxon>
        <taxon>Pentapetalae</taxon>
        <taxon>asterids</taxon>
        <taxon>lamiids</taxon>
        <taxon>Solanales</taxon>
        <taxon>Solanaceae</taxon>
        <taxon>Nicotianoideae</taxon>
        <taxon>Nicotianeae</taxon>
        <taxon>Nicotiana</taxon>
    </lineage>
</organism>
<name>PROF2_TOBAC</name>
<reference key="1">
    <citation type="journal article" date="1996" name="Sex. Plant Reprod.">
        <title>Molecular characterisation of profilin isoforms from tobacco (Nicotiana tabacum) pollen.</title>
        <authorList>
            <person name="Mittermann I."/>
            <person name="Heiss S."/>
            <person name="Dietrich K."/>
            <person name="Valenta R."/>
            <person name="Heberle-Bors E."/>
        </authorList>
        <dbReference type="AGRICOLA" id="IND20526767"/>
    </citation>
    <scope>NUCLEOTIDE SEQUENCE [MRNA]</scope>
    <source>
        <strain>cv. Petit Havana</strain>
        <tissue>Pollen</tissue>
    </source>
</reference>
<reference key="2">
    <citation type="journal article" date="2004" name="Biochem. Biophys. Res. Commun.">
        <title>MAP kinase phosphorylation of plant profilin.</title>
        <authorList>
            <person name="Limmongkon A."/>
            <person name="Giuliani C."/>
            <person name="Valenta R."/>
            <person name="Mittermann I."/>
            <person name="Heberle-Bors E."/>
            <person name="Wilson C."/>
        </authorList>
    </citation>
    <scope>PHOSPHORYLATION AT THR-114</scope>
    <scope>MUTAGENESIS OF THR-114</scope>
</reference>
<gene>
    <name type="primary">PRO2</name>
</gene>
<proteinExistence type="evidence at protein level"/>
<feature type="initiator methionine" description="Removed" evidence="1">
    <location>
        <position position="1"/>
    </location>
</feature>
<feature type="chain" id="PRO_0000199675" description="Profilin-2">
    <location>
        <begin position="2"/>
        <end position="134"/>
    </location>
</feature>
<feature type="modified residue" description="Phosphothreonine" evidence="2">
    <location>
        <position position="114"/>
    </location>
</feature>
<feature type="mutagenesis site" description="Loss of phosphorylation." evidence="2">
    <original>T</original>
    <variation>A</variation>
    <location>
        <position position="114"/>
    </location>
</feature>
<accession>Q9ST99</accession>
<keyword id="KW-0009">Actin-binding</keyword>
<keyword id="KW-0020">Allergen</keyword>
<keyword id="KW-0963">Cytoplasm</keyword>
<keyword id="KW-0206">Cytoskeleton</keyword>
<keyword id="KW-0597">Phosphoprotein</keyword>
<keyword id="KW-1185">Reference proteome</keyword>
<dbReference type="EMBL" id="X93465">
    <property type="protein sequence ID" value="CAA63751.1"/>
    <property type="molecule type" value="mRNA"/>
</dbReference>
<dbReference type="SMR" id="Q9ST99"/>
<dbReference type="STRING" id="4097.Q9ST99"/>
<dbReference type="Allergome" id="1407">
    <property type="allergen name" value="Nic t 8"/>
</dbReference>
<dbReference type="iPTMnet" id="Q9ST99"/>
<dbReference type="PaxDb" id="4097-Q9ST99"/>
<dbReference type="Proteomes" id="UP000084051">
    <property type="component" value="Unplaced"/>
</dbReference>
<dbReference type="GO" id="GO:0005938">
    <property type="term" value="C:cell cortex"/>
    <property type="evidence" value="ECO:0000318"/>
    <property type="project" value="GO_Central"/>
</dbReference>
<dbReference type="GO" id="GO:0005856">
    <property type="term" value="C:cytoskeleton"/>
    <property type="evidence" value="ECO:0007669"/>
    <property type="project" value="UniProtKB-SubCell"/>
</dbReference>
<dbReference type="GO" id="GO:0003785">
    <property type="term" value="F:actin monomer binding"/>
    <property type="evidence" value="ECO:0000318"/>
    <property type="project" value="GO_Central"/>
</dbReference>
<dbReference type="CDD" id="cd00148">
    <property type="entry name" value="PROF"/>
    <property type="match status" value="1"/>
</dbReference>
<dbReference type="FunFam" id="3.30.450.30:FF:000001">
    <property type="entry name" value="Profilin"/>
    <property type="match status" value="1"/>
</dbReference>
<dbReference type="Gene3D" id="3.30.450.30">
    <property type="entry name" value="Dynein light chain 2a, cytoplasmic"/>
    <property type="match status" value="1"/>
</dbReference>
<dbReference type="InterPro" id="IPR048278">
    <property type="entry name" value="PFN"/>
</dbReference>
<dbReference type="InterPro" id="IPR005455">
    <property type="entry name" value="PFN_euk"/>
</dbReference>
<dbReference type="InterPro" id="IPR036140">
    <property type="entry name" value="PFN_sf"/>
</dbReference>
<dbReference type="InterPro" id="IPR027310">
    <property type="entry name" value="Profilin_CS"/>
</dbReference>
<dbReference type="PANTHER" id="PTHR11604">
    <property type="entry name" value="PROFILIN"/>
    <property type="match status" value="1"/>
</dbReference>
<dbReference type="PANTHER" id="PTHR11604:SF25">
    <property type="entry name" value="PROFILIN-5"/>
    <property type="match status" value="1"/>
</dbReference>
<dbReference type="Pfam" id="PF00235">
    <property type="entry name" value="Profilin"/>
    <property type="match status" value="1"/>
</dbReference>
<dbReference type="PRINTS" id="PR00392">
    <property type="entry name" value="PROFILIN"/>
</dbReference>
<dbReference type="PRINTS" id="PR01640">
    <property type="entry name" value="PROFILINPLNT"/>
</dbReference>
<dbReference type="SMART" id="SM00392">
    <property type="entry name" value="PROF"/>
    <property type="match status" value="1"/>
</dbReference>
<dbReference type="SUPFAM" id="SSF55770">
    <property type="entry name" value="Profilin (actin-binding protein)"/>
    <property type="match status" value="1"/>
</dbReference>
<dbReference type="PROSITE" id="PS00414">
    <property type="entry name" value="PROFILIN"/>
    <property type="match status" value="1"/>
</dbReference>
<protein>
    <recommendedName>
        <fullName>Profilin-2</fullName>
    </recommendedName>
    <alternativeName>
        <fullName>Pollen allergen Nic t 8</fullName>
    </alternativeName>
    <allergenName>Nic t 8</allergenName>
</protein>
<comment type="function">
    <text evidence="1">Binds to actin and affects the structure of the cytoskeleton. At high concentrations, profilin prevents the polymerization of actin, whereas it enhances it at low concentrations. By binding to PIP2, it inhibits the formation of IP3 and DG (By similarity).</text>
</comment>
<comment type="subunit">
    <text>Occurs in many kinds of cells as a complex with monomeric actin in a 1:1 ratio.</text>
</comment>
<comment type="subcellular location">
    <subcellularLocation>
        <location evidence="1">Cytoplasm</location>
        <location evidence="1">Cytoskeleton</location>
    </subcellularLocation>
</comment>
<comment type="PTM">
    <text evidence="2">Phosphorylated by MAP kinases.</text>
</comment>
<comment type="allergen">
    <text>Causes an allergic reaction in human.</text>
</comment>
<comment type="similarity">
    <text evidence="3">Belongs to the profilin family.</text>
</comment>
<sequence length="134" mass="14489">MSWQTYVDDHLMADIEGQQGNHLAAAAILGNDGSVWAQSTTFPKFKPEEITNIMKDFDEPGHLAPTGLFLGGAKYMVIQGEPGAVIRGKKGSGGITIKKTNQALIFGIYEEPVTPGQCNMVVEKIGDYLVDQGY</sequence>